<accession>B1XD52</accession>
<feature type="chain" id="PRO_1000091621" description="Ribonuclease HII">
    <location>
        <begin position="1"/>
        <end position="198"/>
    </location>
</feature>
<feature type="domain" description="RNase H type-2" evidence="2">
    <location>
        <begin position="10"/>
        <end position="198"/>
    </location>
</feature>
<feature type="binding site" evidence="1">
    <location>
        <position position="16"/>
    </location>
    <ligand>
        <name>a divalent metal cation</name>
        <dbReference type="ChEBI" id="CHEBI:60240"/>
    </ligand>
</feature>
<feature type="binding site" evidence="1">
    <location>
        <position position="17"/>
    </location>
    <ligand>
        <name>a divalent metal cation</name>
        <dbReference type="ChEBI" id="CHEBI:60240"/>
    </ligand>
</feature>
<feature type="binding site" evidence="1">
    <location>
        <position position="108"/>
    </location>
    <ligand>
        <name>a divalent metal cation</name>
        <dbReference type="ChEBI" id="CHEBI:60240"/>
    </ligand>
</feature>
<keyword id="KW-0963">Cytoplasm</keyword>
<keyword id="KW-0255">Endonuclease</keyword>
<keyword id="KW-0378">Hydrolase</keyword>
<keyword id="KW-0464">Manganese</keyword>
<keyword id="KW-0479">Metal-binding</keyword>
<keyword id="KW-0540">Nuclease</keyword>
<comment type="function">
    <text evidence="1">Endonuclease that specifically degrades the RNA of RNA-DNA hybrids.</text>
</comment>
<comment type="catalytic activity">
    <reaction evidence="1">
        <text>Endonucleolytic cleavage to 5'-phosphomonoester.</text>
        <dbReference type="EC" id="3.1.26.4"/>
    </reaction>
</comment>
<comment type="cofactor">
    <cofactor evidence="1">
        <name>Mn(2+)</name>
        <dbReference type="ChEBI" id="CHEBI:29035"/>
    </cofactor>
    <cofactor evidence="1">
        <name>Mg(2+)</name>
        <dbReference type="ChEBI" id="CHEBI:18420"/>
    </cofactor>
    <text evidence="1">Manganese or magnesium. Binds 1 divalent metal ion per monomer in the absence of substrate. May bind a second metal ion after substrate binding.</text>
</comment>
<comment type="subcellular location">
    <subcellularLocation>
        <location evidence="1">Cytoplasm</location>
    </subcellularLocation>
</comment>
<comment type="similarity">
    <text evidence="1">Belongs to the RNase HII family.</text>
</comment>
<sequence>MIEFVYPHTQLVAGVDEVGRGPLVGAVVTAAVILDPARPIAGLNDSKKLSEKRRLALYEEIKEKALSWSLGRAEPHEIDELNILHATMLAMQRAVAGLHIAPEYVLIDGNRCPKLPMPAMAVVKGDSRVPEISAASILAKVTRDAEMAALDIVFPQYGFAQHKGYPTAFHLEKLAEHGATEHHRRSFGPVKRALGLAS</sequence>
<gene>
    <name evidence="1" type="primary">rnhB</name>
    <name type="ordered locus">ECDH10B_0163</name>
</gene>
<name>RNH2_ECODH</name>
<reference key="1">
    <citation type="journal article" date="2008" name="J. Bacteriol.">
        <title>The complete genome sequence of Escherichia coli DH10B: insights into the biology of a laboratory workhorse.</title>
        <authorList>
            <person name="Durfee T."/>
            <person name="Nelson R."/>
            <person name="Baldwin S."/>
            <person name="Plunkett G. III"/>
            <person name="Burland V."/>
            <person name="Mau B."/>
            <person name="Petrosino J.F."/>
            <person name="Qin X."/>
            <person name="Muzny D.M."/>
            <person name="Ayele M."/>
            <person name="Gibbs R.A."/>
            <person name="Csorgo B."/>
            <person name="Posfai G."/>
            <person name="Weinstock G.M."/>
            <person name="Blattner F.R."/>
        </authorList>
    </citation>
    <scope>NUCLEOTIDE SEQUENCE [LARGE SCALE GENOMIC DNA]</scope>
    <source>
        <strain>K12 / DH10B</strain>
    </source>
</reference>
<evidence type="ECO:0000255" key="1">
    <source>
        <dbReference type="HAMAP-Rule" id="MF_00052"/>
    </source>
</evidence>
<evidence type="ECO:0000255" key="2">
    <source>
        <dbReference type="PROSITE-ProRule" id="PRU01319"/>
    </source>
</evidence>
<dbReference type="EC" id="3.1.26.4" evidence="1"/>
<dbReference type="EMBL" id="CP000948">
    <property type="protein sequence ID" value="ACB01361.1"/>
    <property type="molecule type" value="Genomic_DNA"/>
</dbReference>
<dbReference type="RefSeq" id="WP_000569430.1">
    <property type="nucleotide sequence ID" value="NC_010473.1"/>
</dbReference>
<dbReference type="SMR" id="B1XD52"/>
<dbReference type="GeneID" id="93777242"/>
<dbReference type="KEGG" id="ecd:ECDH10B_0163"/>
<dbReference type="HOGENOM" id="CLU_036532_3_2_6"/>
<dbReference type="GO" id="GO:0005737">
    <property type="term" value="C:cytoplasm"/>
    <property type="evidence" value="ECO:0007669"/>
    <property type="project" value="UniProtKB-SubCell"/>
</dbReference>
<dbReference type="GO" id="GO:0032299">
    <property type="term" value="C:ribonuclease H2 complex"/>
    <property type="evidence" value="ECO:0007669"/>
    <property type="project" value="TreeGrafter"/>
</dbReference>
<dbReference type="GO" id="GO:0030145">
    <property type="term" value="F:manganese ion binding"/>
    <property type="evidence" value="ECO:0007669"/>
    <property type="project" value="UniProtKB-UniRule"/>
</dbReference>
<dbReference type="GO" id="GO:0003723">
    <property type="term" value="F:RNA binding"/>
    <property type="evidence" value="ECO:0007669"/>
    <property type="project" value="InterPro"/>
</dbReference>
<dbReference type="GO" id="GO:0004523">
    <property type="term" value="F:RNA-DNA hybrid ribonuclease activity"/>
    <property type="evidence" value="ECO:0007669"/>
    <property type="project" value="UniProtKB-UniRule"/>
</dbReference>
<dbReference type="GO" id="GO:0043137">
    <property type="term" value="P:DNA replication, removal of RNA primer"/>
    <property type="evidence" value="ECO:0007669"/>
    <property type="project" value="TreeGrafter"/>
</dbReference>
<dbReference type="GO" id="GO:0006298">
    <property type="term" value="P:mismatch repair"/>
    <property type="evidence" value="ECO:0007669"/>
    <property type="project" value="TreeGrafter"/>
</dbReference>
<dbReference type="CDD" id="cd07182">
    <property type="entry name" value="RNase_HII_bacteria_HII_like"/>
    <property type="match status" value="1"/>
</dbReference>
<dbReference type="FunFam" id="3.30.420.10:FF:000006">
    <property type="entry name" value="Ribonuclease HII"/>
    <property type="match status" value="1"/>
</dbReference>
<dbReference type="Gene3D" id="3.30.420.10">
    <property type="entry name" value="Ribonuclease H-like superfamily/Ribonuclease H"/>
    <property type="match status" value="1"/>
</dbReference>
<dbReference type="HAMAP" id="MF_00052_B">
    <property type="entry name" value="RNase_HII_B"/>
    <property type="match status" value="1"/>
</dbReference>
<dbReference type="InterPro" id="IPR022898">
    <property type="entry name" value="RNase_HII"/>
</dbReference>
<dbReference type="InterPro" id="IPR001352">
    <property type="entry name" value="RNase_HII/HIII"/>
</dbReference>
<dbReference type="InterPro" id="IPR024567">
    <property type="entry name" value="RNase_HII/HIII_dom"/>
</dbReference>
<dbReference type="InterPro" id="IPR012337">
    <property type="entry name" value="RNaseH-like_sf"/>
</dbReference>
<dbReference type="InterPro" id="IPR036397">
    <property type="entry name" value="RNaseH_sf"/>
</dbReference>
<dbReference type="NCBIfam" id="NF000594">
    <property type="entry name" value="PRK00015.1-1"/>
    <property type="match status" value="1"/>
</dbReference>
<dbReference type="NCBIfam" id="NF000595">
    <property type="entry name" value="PRK00015.1-3"/>
    <property type="match status" value="1"/>
</dbReference>
<dbReference type="NCBIfam" id="NF000596">
    <property type="entry name" value="PRK00015.1-4"/>
    <property type="match status" value="1"/>
</dbReference>
<dbReference type="PANTHER" id="PTHR10954">
    <property type="entry name" value="RIBONUCLEASE H2 SUBUNIT A"/>
    <property type="match status" value="1"/>
</dbReference>
<dbReference type="PANTHER" id="PTHR10954:SF18">
    <property type="entry name" value="RIBONUCLEASE HII"/>
    <property type="match status" value="1"/>
</dbReference>
<dbReference type="Pfam" id="PF01351">
    <property type="entry name" value="RNase_HII"/>
    <property type="match status" value="1"/>
</dbReference>
<dbReference type="SUPFAM" id="SSF53098">
    <property type="entry name" value="Ribonuclease H-like"/>
    <property type="match status" value="1"/>
</dbReference>
<dbReference type="PROSITE" id="PS51975">
    <property type="entry name" value="RNASE_H_2"/>
    <property type="match status" value="1"/>
</dbReference>
<organism>
    <name type="scientific">Escherichia coli (strain K12 / DH10B)</name>
    <dbReference type="NCBI Taxonomy" id="316385"/>
    <lineage>
        <taxon>Bacteria</taxon>
        <taxon>Pseudomonadati</taxon>
        <taxon>Pseudomonadota</taxon>
        <taxon>Gammaproteobacteria</taxon>
        <taxon>Enterobacterales</taxon>
        <taxon>Enterobacteriaceae</taxon>
        <taxon>Escherichia</taxon>
    </lineage>
</organism>
<proteinExistence type="inferred from homology"/>
<protein>
    <recommendedName>
        <fullName evidence="1">Ribonuclease HII</fullName>
        <shortName evidence="1">RNase HII</shortName>
        <ecNumber evidence="1">3.1.26.4</ecNumber>
    </recommendedName>
</protein>